<organism>
    <name type="scientific">Danio rerio</name>
    <name type="common">Zebrafish</name>
    <name type="synonym">Brachydanio rerio</name>
    <dbReference type="NCBI Taxonomy" id="7955"/>
    <lineage>
        <taxon>Eukaryota</taxon>
        <taxon>Metazoa</taxon>
        <taxon>Chordata</taxon>
        <taxon>Craniata</taxon>
        <taxon>Vertebrata</taxon>
        <taxon>Euteleostomi</taxon>
        <taxon>Actinopterygii</taxon>
        <taxon>Neopterygii</taxon>
        <taxon>Teleostei</taxon>
        <taxon>Ostariophysi</taxon>
        <taxon>Cypriniformes</taxon>
        <taxon>Danionidae</taxon>
        <taxon>Danioninae</taxon>
        <taxon>Danio</taxon>
    </lineage>
</organism>
<dbReference type="EC" id="4.1.3.16"/>
<dbReference type="EMBL" id="BC066708">
    <property type="protein sequence ID" value="AAH66708.1"/>
    <property type="molecule type" value="mRNA"/>
</dbReference>
<dbReference type="RefSeq" id="NP_998035.1">
    <property type="nucleotide sequence ID" value="NM_212870.1"/>
</dbReference>
<dbReference type="SMR" id="Q6NY77"/>
<dbReference type="FunCoup" id="Q6NY77">
    <property type="interactions" value="94"/>
</dbReference>
<dbReference type="STRING" id="7955.ENSDARP00000021126"/>
<dbReference type="PaxDb" id="7955-ENSDARP00000021126"/>
<dbReference type="Ensembl" id="ENSDART00000025820">
    <property type="protein sequence ID" value="ENSDARP00000021126"/>
    <property type="gene ID" value="ENSDARG00000018944"/>
</dbReference>
<dbReference type="GeneID" id="405806"/>
<dbReference type="KEGG" id="dre:405806"/>
<dbReference type="AGR" id="ZFIN:ZDB-GENE-040426-2242"/>
<dbReference type="CTD" id="112817"/>
<dbReference type="ZFIN" id="ZDB-GENE-040426-2242">
    <property type="gene designation" value="hoga1"/>
</dbReference>
<dbReference type="eggNOG" id="ENOG502QWNS">
    <property type="taxonomic scope" value="Eukaryota"/>
</dbReference>
<dbReference type="InParanoid" id="Q6NY77"/>
<dbReference type="OMA" id="GMDACVP"/>
<dbReference type="OrthoDB" id="191315at2759"/>
<dbReference type="PhylomeDB" id="Q6NY77"/>
<dbReference type="TreeFam" id="TF324600"/>
<dbReference type="Reactome" id="R-DRE-389661">
    <property type="pathway name" value="Glyoxylate metabolism and glycine degradation"/>
</dbReference>
<dbReference type="PRO" id="PR:Q6NY77"/>
<dbReference type="Proteomes" id="UP000000437">
    <property type="component" value="Chromosome 22"/>
</dbReference>
<dbReference type="Bgee" id="ENSDARG00000018944">
    <property type="expression patterns" value="Expressed in liver and 21 other cell types or tissues"/>
</dbReference>
<dbReference type="ExpressionAtlas" id="Q6NY77">
    <property type="expression patterns" value="baseline and differential"/>
</dbReference>
<dbReference type="GO" id="GO:0005739">
    <property type="term" value="C:mitochondrion"/>
    <property type="evidence" value="ECO:0000318"/>
    <property type="project" value="GO_Central"/>
</dbReference>
<dbReference type="GO" id="GO:0106009">
    <property type="term" value="F:(4S)-4-hydroxy-2-oxoglutarate aldolase activity"/>
    <property type="evidence" value="ECO:0007669"/>
    <property type="project" value="RHEA"/>
</dbReference>
<dbReference type="GO" id="GO:0008700">
    <property type="term" value="F:(R,S)-4-hydroxy-2-oxoglutarate aldolase activity"/>
    <property type="evidence" value="ECO:0000250"/>
    <property type="project" value="UniProtKB"/>
</dbReference>
<dbReference type="GO" id="GO:0009436">
    <property type="term" value="P:glyoxylate catabolic process"/>
    <property type="evidence" value="ECO:0000250"/>
    <property type="project" value="UniProtKB"/>
</dbReference>
<dbReference type="CDD" id="cd00408">
    <property type="entry name" value="DHDPS-like"/>
    <property type="match status" value="1"/>
</dbReference>
<dbReference type="Gene3D" id="3.20.20.70">
    <property type="entry name" value="Aldolase class I"/>
    <property type="match status" value="1"/>
</dbReference>
<dbReference type="InterPro" id="IPR013785">
    <property type="entry name" value="Aldolase_TIM"/>
</dbReference>
<dbReference type="InterPro" id="IPR002220">
    <property type="entry name" value="DapA-like"/>
</dbReference>
<dbReference type="InterPro" id="IPR020625">
    <property type="entry name" value="Schiff_base-form_aldolases_AS"/>
</dbReference>
<dbReference type="PANTHER" id="PTHR12128:SF66">
    <property type="entry name" value="4-HYDROXY-2-OXOGLUTARATE ALDOLASE, MITOCHONDRIAL"/>
    <property type="match status" value="1"/>
</dbReference>
<dbReference type="PANTHER" id="PTHR12128">
    <property type="entry name" value="DIHYDRODIPICOLINATE SYNTHASE"/>
    <property type="match status" value="1"/>
</dbReference>
<dbReference type="Pfam" id="PF00701">
    <property type="entry name" value="DHDPS"/>
    <property type="match status" value="1"/>
</dbReference>
<dbReference type="PIRSF" id="PIRSF001365">
    <property type="entry name" value="DHDPS"/>
    <property type="match status" value="1"/>
</dbReference>
<dbReference type="PRINTS" id="PR00146">
    <property type="entry name" value="DHPICSNTHASE"/>
</dbReference>
<dbReference type="SMART" id="SM01130">
    <property type="entry name" value="DHDPS"/>
    <property type="match status" value="1"/>
</dbReference>
<dbReference type="SUPFAM" id="SSF51569">
    <property type="entry name" value="Aldolase"/>
    <property type="match status" value="1"/>
</dbReference>
<dbReference type="PROSITE" id="PS00666">
    <property type="entry name" value="DHDPS_2"/>
    <property type="match status" value="1"/>
</dbReference>
<keyword id="KW-0456">Lyase</keyword>
<keyword id="KW-0496">Mitochondrion</keyword>
<keyword id="KW-1185">Reference proteome</keyword>
<keyword id="KW-0704">Schiff base</keyword>
<keyword id="KW-0809">Transit peptide</keyword>
<protein>
    <recommendedName>
        <fullName>4-hydroxy-2-oxoglutarate aldolase, mitochondrial</fullName>
        <ecNumber>4.1.3.16</ecNumber>
    </recommendedName>
    <alternativeName>
        <fullName>Dihydrodipicolinate synthase-like</fullName>
        <shortName>DHDPS-like protein</shortName>
    </alternativeName>
    <alternativeName>
        <fullName>Probable 2-keto-4-hydroxyglutarate aldolase</fullName>
        <shortName>Probable KHG-aldolase</shortName>
    </alternativeName>
</protein>
<proteinExistence type="evidence at transcript level"/>
<comment type="function">
    <text evidence="1">Catalyzes the final step in the metabolic pathway of hydroxyproline.</text>
</comment>
<comment type="catalytic activity">
    <reaction>
        <text>(4S)-4-hydroxy-2-oxoglutarate = glyoxylate + pyruvate</text>
        <dbReference type="Rhea" id="RHEA:35639"/>
        <dbReference type="ChEBI" id="CHEBI:15361"/>
        <dbReference type="ChEBI" id="CHEBI:36655"/>
        <dbReference type="ChEBI" id="CHEBI:71685"/>
        <dbReference type="EC" id="4.1.3.16"/>
    </reaction>
</comment>
<comment type="catalytic activity">
    <reaction>
        <text>(4R)-4-hydroxy-2-oxoglutarate = glyoxylate + pyruvate</text>
        <dbReference type="Rhea" id="RHEA:30687"/>
        <dbReference type="ChEBI" id="CHEBI:15361"/>
        <dbReference type="ChEBI" id="CHEBI:36655"/>
        <dbReference type="ChEBI" id="CHEBI:62213"/>
        <dbReference type="EC" id="4.1.3.16"/>
    </reaction>
</comment>
<comment type="activity regulation">
    <text evidence="1">Inhibited by divalent cations.</text>
</comment>
<comment type="subunit">
    <text evidence="1">Homotetramer.</text>
</comment>
<comment type="subcellular location">
    <subcellularLocation>
        <location evidence="2">Mitochondrion</location>
    </subcellularLocation>
</comment>
<comment type="similarity">
    <text evidence="4">Belongs to the DapA family.</text>
</comment>
<sequence length="324" mass="35307">MFAHRSFSLLCRRSAVTSWRSQSHTAGKRLDISGIYPPIATPFTEPEDVDYQKLDDNIRKYGRLPFRGLVVQGSNGEYPYLTAEERVEVVKRVKQALPKDKLVMAGSGCESTRATIQMSQRMADAGADCVLVVTPCFYRGRMDSRALINHYSKVADSCSVPVVLYSVPANTGLDLPVDAVIQLSKHPNIVGLKDSGGDITRIALMVQKTRSQDFQVLAGSAGFLMAAYAVGAVGGVCALANVLGQQVCELAQLCVSGRWDEAKELQYRLIEPNTAVTRGFGVPALKLAMDWFGYHGGICRSPLQPLSKADLEALRGKFSSNGWL</sequence>
<feature type="transit peptide" description="Mitochondrion" evidence="3">
    <location>
        <begin position="1"/>
        <end position="22"/>
    </location>
</feature>
<feature type="chain" id="PRO_0000273348" description="4-hydroxy-2-oxoglutarate aldolase, mitochondrial">
    <location>
        <begin position="23"/>
        <end position="324"/>
    </location>
</feature>
<feature type="active site" description="Schiff-base intermediate with substrate" evidence="1">
    <location>
        <position position="193"/>
    </location>
</feature>
<feature type="binding site" evidence="1">
    <location>
        <begin position="74"/>
        <end position="75"/>
    </location>
    <ligand>
        <name>substrate</name>
    </ligand>
</feature>
<feature type="binding site" evidence="1">
    <location>
        <position position="195"/>
    </location>
    <ligand>
        <name>substrate</name>
    </ligand>
</feature>
<feature type="binding site" evidence="1">
    <location>
        <position position="219"/>
    </location>
    <ligand>
        <name>substrate</name>
    </ligand>
</feature>
<feature type="site" description="Involved in proton transfer during cleavage" evidence="1">
    <location>
        <position position="165"/>
    </location>
</feature>
<name>HOGA1_DANRE</name>
<reference key="1">
    <citation type="submission" date="2004-03" db="EMBL/GenBank/DDBJ databases">
        <authorList>
            <consortium name="NIH - Zebrafish Gene Collection (ZGC) project"/>
        </authorList>
    </citation>
    <scope>NUCLEOTIDE SEQUENCE [LARGE SCALE MRNA]</scope>
    <source>
        <tissue>Kidney</tissue>
    </source>
</reference>
<accession>Q6NY77</accession>
<gene>
    <name type="ORF">zgc:77082</name>
</gene>
<evidence type="ECO:0000250" key="1"/>
<evidence type="ECO:0000250" key="2">
    <source>
        <dbReference type="UniProtKB" id="Q0P5I5"/>
    </source>
</evidence>
<evidence type="ECO:0000255" key="3"/>
<evidence type="ECO:0000305" key="4"/>